<organismHost>
    <name type="scientific">Homo sapiens</name>
    <name type="common">Human</name>
    <dbReference type="NCBI Taxonomy" id="9606"/>
</organismHost>
<accession>P69618</accession>
<accession>P25883</accession>
<protein>
    <recommendedName>
        <fullName>Small delta antigen</fullName>
        <shortName>S-HDAg</shortName>
    </recommendedName>
    <alternativeName>
        <fullName>p24</fullName>
    </alternativeName>
</protein>
<proteinExistence type="inferred from homology"/>
<dbReference type="EMBL" id="X60193">
    <property type="protein sequence ID" value="CAA42749.1"/>
    <property type="molecule type" value="Genomic_RNA"/>
</dbReference>
<dbReference type="PIR" id="B36409">
    <property type="entry name" value="SAVLDS"/>
</dbReference>
<dbReference type="SMR" id="P69618"/>
<dbReference type="Proteomes" id="UP000008105">
    <property type="component" value="Segment"/>
</dbReference>
<dbReference type="GO" id="GO:0043657">
    <property type="term" value="C:host cell"/>
    <property type="evidence" value="ECO:0007669"/>
    <property type="project" value="GOC"/>
</dbReference>
<dbReference type="GO" id="GO:0042025">
    <property type="term" value="C:host cell nucleus"/>
    <property type="evidence" value="ECO:0007669"/>
    <property type="project" value="UniProtKB-SubCell"/>
</dbReference>
<dbReference type="GO" id="GO:0044423">
    <property type="term" value="C:virion component"/>
    <property type="evidence" value="ECO:0007669"/>
    <property type="project" value="UniProtKB-KW"/>
</dbReference>
<dbReference type="GO" id="GO:0003723">
    <property type="term" value="F:RNA binding"/>
    <property type="evidence" value="ECO:0007669"/>
    <property type="project" value="UniProtKB-KW"/>
</dbReference>
<dbReference type="GO" id="GO:0046718">
    <property type="term" value="P:symbiont entry into host cell"/>
    <property type="evidence" value="ECO:0007669"/>
    <property type="project" value="UniProtKB-KW"/>
</dbReference>
<dbReference type="GO" id="GO:0075732">
    <property type="term" value="P:viral penetration into host nucleus"/>
    <property type="evidence" value="ECO:0007669"/>
    <property type="project" value="UniProtKB-KW"/>
</dbReference>
<dbReference type="Gene3D" id="4.10.220.40">
    <property type="entry name" value="Delta antigen, N-terminal"/>
    <property type="match status" value="1"/>
</dbReference>
<dbReference type="InterPro" id="IPR027403">
    <property type="entry name" value="Delta_antigen_N"/>
</dbReference>
<dbReference type="InterPro" id="IPR037517">
    <property type="entry name" value="HDAG_dom"/>
</dbReference>
<dbReference type="InterPro" id="IPR002506">
    <property type="entry name" value="HDV_ag"/>
</dbReference>
<dbReference type="Pfam" id="PF01517">
    <property type="entry name" value="HDV_ag"/>
    <property type="match status" value="1"/>
</dbReference>
<dbReference type="SUPFAM" id="SSF58108">
    <property type="entry name" value="Oligomerization domain of hepatitis delta antigen"/>
    <property type="match status" value="1"/>
</dbReference>
<dbReference type="PROSITE" id="PS51838">
    <property type="entry name" value="HDAG"/>
    <property type="match status" value="1"/>
</dbReference>
<reference key="1">
    <citation type="journal article" date="1991" name="Nucleic Acids Res.">
        <title>Complete nucleotide sequence of hepatitis delta virus RNA in Japan.</title>
        <authorList>
            <person name="Imazeki F."/>
            <person name="Omata M."/>
            <person name="Ohto M."/>
        </authorList>
    </citation>
    <scope>NUCLEOTIDE SEQUENCE [GENOMIC RNA]</scope>
</reference>
<reference key="2">
    <citation type="journal article" date="2005" name="Acta Virol.">
        <title>Hepatitis D.</title>
        <authorList>
            <person name="Husa P."/>
            <person name="Linhartova A."/>
            <person name="Nemecek V."/>
            <person name="Husova L."/>
        </authorList>
    </citation>
    <scope>REVIEW</scope>
</reference>
<reference key="3">
    <citation type="journal article" date="2006" name="Curr. Top. Microbiol. Immunol.">
        <title>Post-translational modification of delta antigen of hepatitis D virus.</title>
        <authorList>
            <person name="Huang W.H."/>
            <person name="Chen C.W."/>
            <person name="Wu H.L."/>
            <person name="Chen P.J."/>
        </authorList>
    </citation>
    <scope>REVIEW</scope>
</reference>
<comment type="function">
    <text evidence="1">Promotes both transcription and replication of genomic RNA. Following virus entry into host cell, provides nuclear import of HDV RNPs thanks to its nuclear localization signal. May interact with host RNA polymerase II thereby changing its template requirement from DNA to RNA. RNA pol II complex would then acts as an RNA-directed RNA polymerase, and transcribe and replicate HDV genome (By similarity).</text>
</comment>
<comment type="subunit">
    <text evidence="1">Homodimer. Homooctamer. Interacts with host RNA polymerase II complex, and with host NPM1.</text>
</comment>
<comment type="subcellular location">
    <subcellularLocation>
        <location>Virion</location>
    </subcellularLocation>
    <subcellularLocation>
        <location evidence="1">Host nucleus</location>
    </subcellularLocation>
</comment>
<comment type="PTM">
    <text evidence="1">Phosphorylated at serines and threonines by host MAPK1/3, PKR, and CK2.</text>
</comment>
<comment type="PTM">
    <text evidence="1">Acetylation modulates nuclear localization. Neo-synthesized genomic RNA migrates from the nucleus to the cytoplasm, where they interact with S-HDAg, which once acetylated redirect both partners to the nucleus (By similarity).</text>
</comment>
<comment type="PTM">
    <text evidence="1">Methylation plays a role in viral genome replication.</text>
</comment>
<comment type="RNA editing">
    <location>
        <position position="196" evidence="1"/>
    </location>
    <text evidence="1">Partially edited. RNA editing at this position occurs on the antigenomic strand and consists of a conversion of A to G catalyzed by the cellular enzyme ADAR1. The unedited RNA version gives rise to the small delta antigen, which ends with a nonsense codon at position 196. In the edited version, this amber codon is modified to a tryptophan codon and gives rise to the large delta antigen protein (AC P0C6L4). S-HDAg suppresses editing of non-replicating antigenomic RNA, thereby regulating the extent of editing (By similarity).</text>
</comment>
<comment type="miscellaneous">
    <text>This strain belongs to the genotype II found only in East Asia.</text>
</comment>
<comment type="similarity">
    <text evidence="6">Belongs to the hepatitis delta antigen family.</text>
</comment>
<feature type="chain" id="PRO_0000038127" description="Small delta antigen">
    <location>
        <begin position="1"/>
        <end position="195"/>
    </location>
</feature>
<feature type="domain" description="HDAg" evidence="4">
    <location>
        <begin position="21"/>
        <end position="195"/>
    </location>
</feature>
<feature type="region of interest" description="Dimerization" evidence="3">
    <location>
        <begin position="13"/>
        <end position="60"/>
    </location>
</feature>
<feature type="region of interest" description="Disordered" evidence="5">
    <location>
        <begin position="58"/>
        <end position="195"/>
    </location>
</feature>
<feature type="region of interest" description="RNA-binding" evidence="4">
    <location>
        <begin position="97"/>
        <end position="107"/>
    </location>
</feature>
<feature type="region of interest" description="RNAPII-binding" evidence="4">
    <location>
        <begin position="130"/>
        <end position="195"/>
    </location>
</feature>
<feature type="region of interest" description="RNA-binding" evidence="4">
    <location>
        <begin position="136"/>
        <end position="146"/>
    </location>
</feature>
<feature type="short sequence motif" description="Nuclear localization signal" evidence="2">
    <location>
        <begin position="66"/>
        <end position="75"/>
    </location>
</feature>
<feature type="compositionally biased region" description="Basic and acidic residues" evidence="5">
    <location>
        <begin position="93"/>
        <end position="112"/>
    </location>
</feature>
<feature type="compositionally biased region" description="Gly residues" evidence="5">
    <location>
        <begin position="158"/>
        <end position="167"/>
    </location>
</feature>
<feature type="modified residue" description="Phosphoserine; by host CK2" evidence="2">
    <location>
        <position position="2"/>
    </location>
</feature>
<feature type="modified residue" description="Omega-N-methylated arginine; by host PRMT1" evidence="2">
    <location>
        <position position="14"/>
    </location>
</feature>
<feature type="modified residue" description="N6-acetyllysine; by host" evidence="2">
    <location>
        <position position="72"/>
    </location>
</feature>
<feature type="modified residue" description="Phosphoserine; by host" evidence="2">
    <location>
        <position position="123"/>
    </location>
</feature>
<feature type="modified residue" description="Phosphoserine; by host MAPK1 and MAPK3" evidence="2">
    <location>
        <position position="177"/>
    </location>
</feature>
<feature type="modified residue" description="Phosphothreonine; by host" evidence="2">
    <location>
        <position position="182"/>
    </location>
</feature>
<sequence length="195" mass="21928">MSQSETRRGRRGTREETLEKWITARKKAEELEKDLRKTRKTIKKLEEENPWLGNIVGIIRKGKDGEGAPPAKRPRTDQMEVDSGPGKRPHKSGFTDKEREDHRRRKALENKKKQLSAGGKILSKEEEEELRRLTDEDEERKRRVAGPRVGDVNPSRGGPRGAPGGGFVPQMAGVPESPFSRTGEGLDIRGTQGFP</sequence>
<evidence type="ECO:0000250" key="1"/>
<evidence type="ECO:0000250" key="2">
    <source>
        <dbReference type="UniProtKB" id="P0C6L3"/>
    </source>
</evidence>
<evidence type="ECO:0000255" key="3"/>
<evidence type="ECO:0000255" key="4">
    <source>
        <dbReference type="PROSITE-ProRule" id="PRU01183"/>
    </source>
</evidence>
<evidence type="ECO:0000256" key="5">
    <source>
        <dbReference type="SAM" id="MobiDB-lite"/>
    </source>
</evidence>
<evidence type="ECO:0000305" key="6"/>
<organism>
    <name type="scientific">Hepatitis delta virus genotype II (isolate 7/18/83)</name>
    <name type="common">HDV</name>
    <dbReference type="NCBI Taxonomy" id="10421"/>
    <lineage>
        <taxon>Viruses</taxon>
        <taxon>Ribozyviria</taxon>
        <taxon>Kolmioviridae</taxon>
        <taxon>Deltavirus</taxon>
        <taxon>Hepatitis delta virus</taxon>
    </lineage>
</organism>
<keyword id="KW-0007">Acetylation</keyword>
<keyword id="KW-1048">Host nucleus</keyword>
<keyword id="KW-0945">Host-virus interaction</keyword>
<keyword id="KW-0488">Methylation</keyword>
<keyword id="KW-0597">Phosphoprotein</keyword>
<keyword id="KW-0691">RNA editing</keyword>
<keyword id="KW-0694">RNA-binding</keyword>
<keyword id="KW-1163">Viral penetration into host nucleus</keyword>
<keyword id="KW-0946">Virion</keyword>
<keyword id="KW-1160">Virus entry into host cell</keyword>
<name>SHDAG_HDV83</name>